<protein>
    <recommendedName>
        <fullName evidence="1">DNA repair protein RecO</fullName>
    </recommendedName>
    <alternativeName>
        <fullName evidence="1">Recombination protein O</fullName>
    </alternativeName>
</protein>
<comment type="function">
    <text evidence="1">Involved in DNA repair and RecF pathway recombination.</text>
</comment>
<comment type="similarity">
    <text evidence="1">Belongs to the RecO family.</text>
</comment>
<accession>B9KSB0</accession>
<sequence length="239" mass="26000">MMEWRDEGALLSVRRHGESSAIIEVFTAAHGRHAGVVRGGASRKIAPILQPGAQLDLTWKARLDEHMGAFTVEPLRSRTALLGDRLGLAGLNAICAMLHVTLPEREPHSTLWQESMALLDALDRPGWPPAYLRWEMRLLEETGFGLDLTRCAVTGSREDLAFVSPKTGRAVSRGAAGGWADRLFPLPLALLGQGPASAEEVRQGLAITGHFLGRELAPLLNGRPMPEARARLMELLARA</sequence>
<proteinExistence type="inferred from homology"/>
<dbReference type="EMBL" id="CP001150">
    <property type="protein sequence ID" value="ACM02938.1"/>
    <property type="molecule type" value="Genomic_DNA"/>
</dbReference>
<dbReference type="SMR" id="B9KSB0"/>
<dbReference type="KEGG" id="rsk:RSKD131_3078"/>
<dbReference type="HOGENOM" id="CLU_086029_0_0_5"/>
<dbReference type="GO" id="GO:0043590">
    <property type="term" value="C:bacterial nucleoid"/>
    <property type="evidence" value="ECO:0007669"/>
    <property type="project" value="TreeGrafter"/>
</dbReference>
<dbReference type="GO" id="GO:0006310">
    <property type="term" value="P:DNA recombination"/>
    <property type="evidence" value="ECO:0007669"/>
    <property type="project" value="UniProtKB-UniRule"/>
</dbReference>
<dbReference type="GO" id="GO:0006302">
    <property type="term" value="P:double-strand break repair"/>
    <property type="evidence" value="ECO:0007669"/>
    <property type="project" value="TreeGrafter"/>
</dbReference>
<dbReference type="Gene3D" id="2.40.50.140">
    <property type="entry name" value="Nucleic acid-binding proteins"/>
    <property type="match status" value="1"/>
</dbReference>
<dbReference type="Gene3D" id="1.20.1440.120">
    <property type="entry name" value="Recombination protein O, C-terminal domain"/>
    <property type="match status" value="1"/>
</dbReference>
<dbReference type="HAMAP" id="MF_00201">
    <property type="entry name" value="RecO"/>
    <property type="match status" value="1"/>
</dbReference>
<dbReference type="InterPro" id="IPR037278">
    <property type="entry name" value="ARFGAP/RecO"/>
</dbReference>
<dbReference type="InterPro" id="IPR022572">
    <property type="entry name" value="DNA_rep/recomb_RecO_N"/>
</dbReference>
<dbReference type="InterPro" id="IPR012340">
    <property type="entry name" value="NA-bd_OB-fold"/>
</dbReference>
<dbReference type="InterPro" id="IPR003717">
    <property type="entry name" value="RecO"/>
</dbReference>
<dbReference type="InterPro" id="IPR042242">
    <property type="entry name" value="RecO_C"/>
</dbReference>
<dbReference type="NCBIfam" id="TIGR00613">
    <property type="entry name" value="reco"/>
    <property type="match status" value="1"/>
</dbReference>
<dbReference type="PANTHER" id="PTHR33991">
    <property type="entry name" value="DNA REPAIR PROTEIN RECO"/>
    <property type="match status" value="1"/>
</dbReference>
<dbReference type="PANTHER" id="PTHR33991:SF1">
    <property type="entry name" value="DNA REPAIR PROTEIN RECO"/>
    <property type="match status" value="1"/>
</dbReference>
<dbReference type="Pfam" id="PF02565">
    <property type="entry name" value="RecO_C"/>
    <property type="match status" value="1"/>
</dbReference>
<dbReference type="Pfam" id="PF11967">
    <property type="entry name" value="RecO_N"/>
    <property type="match status" value="1"/>
</dbReference>
<dbReference type="SUPFAM" id="SSF57863">
    <property type="entry name" value="ArfGap/RecO-like zinc finger"/>
    <property type="match status" value="1"/>
</dbReference>
<dbReference type="SUPFAM" id="SSF50249">
    <property type="entry name" value="Nucleic acid-binding proteins"/>
    <property type="match status" value="1"/>
</dbReference>
<keyword id="KW-0227">DNA damage</keyword>
<keyword id="KW-0233">DNA recombination</keyword>
<keyword id="KW-0234">DNA repair</keyword>
<organism>
    <name type="scientific">Cereibacter sphaeroides (strain KD131 / KCTC 12085)</name>
    <name type="common">Rhodobacter sphaeroides</name>
    <dbReference type="NCBI Taxonomy" id="557760"/>
    <lineage>
        <taxon>Bacteria</taxon>
        <taxon>Pseudomonadati</taxon>
        <taxon>Pseudomonadota</taxon>
        <taxon>Alphaproteobacteria</taxon>
        <taxon>Rhodobacterales</taxon>
        <taxon>Paracoccaceae</taxon>
        <taxon>Cereibacter</taxon>
    </lineage>
</organism>
<evidence type="ECO:0000255" key="1">
    <source>
        <dbReference type="HAMAP-Rule" id="MF_00201"/>
    </source>
</evidence>
<name>RECO_CERSK</name>
<reference key="1">
    <citation type="journal article" date="2009" name="J. Bacteriol.">
        <title>Complete genome sequence of Rhodobacter sphaeroides KD131.</title>
        <authorList>
            <person name="Lim S.-K."/>
            <person name="Kim S.J."/>
            <person name="Cha S.H."/>
            <person name="Oh Y.-K."/>
            <person name="Rhee H.-J."/>
            <person name="Kim M.-S."/>
            <person name="Lee J.K."/>
        </authorList>
    </citation>
    <scope>NUCLEOTIDE SEQUENCE [LARGE SCALE GENOMIC DNA]</scope>
    <source>
        <strain>KD131 / KCTC 12085</strain>
    </source>
</reference>
<gene>
    <name evidence="1" type="primary">recO</name>
    <name type="ordered locus">RSKD131_3078</name>
</gene>
<feature type="chain" id="PRO_1000193414" description="DNA repair protein RecO">
    <location>
        <begin position="1"/>
        <end position="239"/>
    </location>
</feature>